<gene>
    <name evidence="1" type="primary">rplN</name>
    <name type="ordered locus">PsycPRwf_0436</name>
</gene>
<feature type="chain" id="PRO_1000073425" description="Large ribosomal subunit protein uL14">
    <location>
        <begin position="1"/>
        <end position="122"/>
    </location>
</feature>
<sequence>MIQTETILEVADNSGARRVQCIKVLGGSHRRYASVGDIIKVSVKEAIPRGRVKKGDVMNAVVVRTKKGVRRPDGSVLRFDDNAAVLLNQNKAPIATRIFGPVTRELRGDQFMKIVSLAPEVL</sequence>
<dbReference type="EMBL" id="CP000713">
    <property type="protein sequence ID" value="ABQ93391.1"/>
    <property type="molecule type" value="Genomic_DNA"/>
</dbReference>
<dbReference type="SMR" id="A5WCK0"/>
<dbReference type="STRING" id="349106.PsycPRwf_0436"/>
<dbReference type="KEGG" id="prw:PsycPRwf_0436"/>
<dbReference type="eggNOG" id="COG0093">
    <property type="taxonomic scope" value="Bacteria"/>
</dbReference>
<dbReference type="HOGENOM" id="CLU_095071_2_1_6"/>
<dbReference type="GO" id="GO:0022625">
    <property type="term" value="C:cytosolic large ribosomal subunit"/>
    <property type="evidence" value="ECO:0007669"/>
    <property type="project" value="TreeGrafter"/>
</dbReference>
<dbReference type="GO" id="GO:0070180">
    <property type="term" value="F:large ribosomal subunit rRNA binding"/>
    <property type="evidence" value="ECO:0007669"/>
    <property type="project" value="TreeGrafter"/>
</dbReference>
<dbReference type="GO" id="GO:0003735">
    <property type="term" value="F:structural constituent of ribosome"/>
    <property type="evidence" value="ECO:0007669"/>
    <property type="project" value="InterPro"/>
</dbReference>
<dbReference type="GO" id="GO:0006412">
    <property type="term" value="P:translation"/>
    <property type="evidence" value="ECO:0007669"/>
    <property type="project" value="UniProtKB-UniRule"/>
</dbReference>
<dbReference type="CDD" id="cd00337">
    <property type="entry name" value="Ribosomal_uL14"/>
    <property type="match status" value="1"/>
</dbReference>
<dbReference type="FunFam" id="2.40.150.20:FF:000001">
    <property type="entry name" value="50S ribosomal protein L14"/>
    <property type="match status" value="1"/>
</dbReference>
<dbReference type="Gene3D" id="2.40.150.20">
    <property type="entry name" value="Ribosomal protein L14"/>
    <property type="match status" value="1"/>
</dbReference>
<dbReference type="HAMAP" id="MF_01367">
    <property type="entry name" value="Ribosomal_uL14"/>
    <property type="match status" value="1"/>
</dbReference>
<dbReference type="InterPro" id="IPR000218">
    <property type="entry name" value="Ribosomal_uL14"/>
</dbReference>
<dbReference type="InterPro" id="IPR005745">
    <property type="entry name" value="Ribosomal_uL14_bac-type"/>
</dbReference>
<dbReference type="InterPro" id="IPR019972">
    <property type="entry name" value="Ribosomal_uL14_CS"/>
</dbReference>
<dbReference type="InterPro" id="IPR036853">
    <property type="entry name" value="Ribosomal_uL14_sf"/>
</dbReference>
<dbReference type="NCBIfam" id="TIGR01067">
    <property type="entry name" value="rplN_bact"/>
    <property type="match status" value="1"/>
</dbReference>
<dbReference type="PANTHER" id="PTHR11761">
    <property type="entry name" value="50S/60S RIBOSOMAL PROTEIN L14/L23"/>
    <property type="match status" value="1"/>
</dbReference>
<dbReference type="PANTHER" id="PTHR11761:SF3">
    <property type="entry name" value="LARGE RIBOSOMAL SUBUNIT PROTEIN UL14M"/>
    <property type="match status" value="1"/>
</dbReference>
<dbReference type="Pfam" id="PF00238">
    <property type="entry name" value="Ribosomal_L14"/>
    <property type="match status" value="1"/>
</dbReference>
<dbReference type="SMART" id="SM01374">
    <property type="entry name" value="Ribosomal_L14"/>
    <property type="match status" value="1"/>
</dbReference>
<dbReference type="SUPFAM" id="SSF50193">
    <property type="entry name" value="Ribosomal protein L14"/>
    <property type="match status" value="1"/>
</dbReference>
<dbReference type="PROSITE" id="PS00049">
    <property type="entry name" value="RIBOSOMAL_L14"/>
    <property type="match status" value="1"/>
</dbReference>
<evidence type="ECO:0000255" key="1">
    <source>
        <dbReference type="HAMAP-Rule" id="MF_01367"/>
    </source>
</evidence>
<evidence type="ECO:0000305" key="2"/>
<name>RL14_PSYWF</name>
<protein>
    <recommendedName>
        <fullName evidence="1">Large ribosomal subunit protein uL14</fullName>
    </recommendedName>
    <alternativeName>
        <fullName evidence="2">50S ribosomal protein L14</fullName>
    </alternativeName>
</protein>
<comment type="function">
    <text evidence="1">Binds to 23S rRNA. Forms part of two intersubunit bridges in the 70S ribosome.</text>
</comment>
<comment type="subunit">
    <text evidence="1">Part of the 50S ribosomal subunit. Forms a cluster with proteins L3 and L19. In the 70S ribosome, L14 and L19 interact and together make contacts with the 16S rRNA in bridges B5 and B8.</text>
</comment>
<comment type="similarity">
    <text evidence="1">Belongs to the universal ribosomal protein uL14 family.</text>
</comment>
<proteinExistence type="inferred from homology"/>
<organism>
    <name type="scientific">Psychrobacter sp. (strain PRwf-1)</name>
    <dbReference type="NCBI Taxonomy" id="349106"/>
    <lineage>
        <taxon>Bacteria</taxon>
        <taxon>Pseudomonadati</taxon>
        <taxon>Pseudomonadota</taxon>
        <taxon>Gammaproteobacteria</taxon>
        <taxon>Moraxellales</taxon>
        <taxon>Moraxellaceae</taxon>
        <taxon>Psychrobacter</taxon>
    </lineage>
</organism>
<reference key="1">
    <citation type="submission" date="2007-05" db="EMBL/GenBank/DDBJ databases">
        <title>Complete sequence of chromosome of Psychrobacter sp. PRwf-1.</title>
        <authorList>
            <consortium name="US DOE Joint Genome Institute"/>
            <person name="Copeland A."/>
            <person name="Lucas S."/>
            <person name="Lapidus A."/>
            <person name="Barry K."/>
            <person name="Detter J.C."/>
            <person name="Glavina del Rio T."/>
            <person name="Hammon N."/>
            <person name="Israni S."/>
            <person name="Dalin E."/>
            <person name="Tice H."/>
            <person name="Pitluck S."/>
            <person name="Chain P."/>
            <person name="Malfatti S."/>
            <person name="Shin M."/>
            <person name="Vergez L."/>
            <person name="Schmutz J."/>
            <person name="Larimer F."/>
            <person name="Land M."/>
            <person name="Hauser L."/>
            <person name="Kyrpides N."/>
            <person name="Kim E."/>
            <person name="Tiedje J."/>
            <person name="Richardson P."/>
        </authorList>
    </citation>
    <scope>NUCLEOTIDE SEQUENCE [LARGE SCALE GENOMIC DNA]</scope>
    <source>
        <strain>PRwf-1</strain>
    </source>
</reference>
<keyword id="KW-0687">Ribonucleoprotein</keyword>
<keyword id="KW-0689">Ribosomal protein</keyword>
<keyword id="KW-0694">RNA-binding</keyword>
<keyword id="KW-0699">rRNA-binding</keyword>
<accession>A5WCK0</accession>